<dbReference type="EC" id="1.14.19.18" evidence="4"/>
<dbReference type="EMBL" id="AB085690">
    <property type="protein sequence ID" value="BAB93118.1"/>
    <property type="molecule type" value="Genomic_DNA"/>
</dbReference>
<dbReference type="SMR" id="Q8NKG8"/>
<dbReference type="KEGG" id="ag:BAB93118"/>
<dbReference type="VEuPathDB" id="FungiDB:KLLA0_E19471g"/>
<dbReference type="BioCyc" id="MetaCyc:MONOMER-14475"/>
<dbReference type="BRENDA" id="1.14.19.18">
    <property type="organism ID" value="2825"/>
</dbReference>
<dbReference type="BRENDA" id="1.14.19.4">
    <property type="organism ID" value="2825"/>
</dbReference>
<dbReference type="UniPathway" id="UPA00222"/>
<dbReference type="GO" id="GO:0016020">
    <property type="term" value="C:membrane"/>
    <property type="evidence" value="ECO:0007669"/>
    <property type="project" value="UniProtKB-SubCell"/>
</dbReference>
<dbReference type="GO" id="GO:0046872">
    <property type="term" value="F:metal ion binding"/>
    <property type="evidence" value="ECO:0007669"/>
    <property type="project" value="UniProtKB-KW"/>
</dbReference>
<dbReference type="GO" id="GO:0016717">
    <property type="term" value="F:oxidoreductase activity, acting on paired donors, with oxidation of a pair of donors resulting in the reduction of molecular oxygen to two molecules of water"/>
    <property type="evidence" value="ECO:0007669"/>
    <property type="project" value="TreeGrafter"/>
</dbReference>
<dbReference type="GO" id="GO:0006665">
    <property type="term" value="P:sphingolipid metabolic process"/>
    <property type="evidence" value="ECO:0007669"/>
    <property type="project" value="UniProtKB-UniPathway"/>
</dbReference>
<dbReference type="CDD" id="cd03506">
    <property type="entry name" value="Delta6-FADS-like"/>
    <property type="match status" value="1"/>
</dbReference>
<dbReference type="Gene3D" id="3.10.120.10">
    <property type="entry name" value="Cytochrome b5-like heme/steroid binding domain"/>
    <property type="match status" value="1"/>
</dbReference>
<dbReference type="InterPro" id="IPR001199">
    <property type="entry name" value="Cyt_B5-like_heme/steroid-bd"/>
</dbReference>
<dbReference type="InterPro" id="IPR036400">
    <property type="entry name" value="Cyt_B5-like_heme/steroid_sf"/>
</dbReference>
<dbReference type="InterPro" id="IPR005804">
    <property type="entry name" value="FA_desaturase_dom"/>
</dbReference>
<dbReference type="InterPro" id="IPR012171">
    <property type="entry name" value="Fatty_acid_desaturase"/>
</dbReference>
<dbReference type="PANTHER" id="PTHR19353:SF30">
    <property type="entry name" value="DELTA 8-(E)-SPHINGOLIPID DESATURASE"/>
    <property type="match status" value="1"/>
</dbReference>
<dbReference type="PANTHER" id="PTHR19353">
    <property type="entry name" value="FATTY ACID DESATURASE 2"/>
    <property type="match status" value="1"/>
</dbReference>
<dbReference type="Pfam" id="PF00173">
    <property type="entry name" value="Cyt-b5"/>
    <property type="match status" value="1"/>
</dbReference>
<dbReference type="Pfam" id="PF00487">
    <property type="entry name" value="FA_desaturase"/>
    <property type="match status" value="1"/>
</dbReference>
<dbReference type="PIRSF" id="PIRSF015921">
    <property type="entry name" value="FA_sphinglp_des"/>
    <property type="match status" value="1"/>
</dbReference>
<dbReference type="SMART" id="SM01117">
    <property type="entry name" value="Cyt-b5"/>
    <property type="match status" value="1"/>
</dbReference>
<dbReference type="SUPFAM" id="SSF55856">
    <property type="entry name" value="Cytochrome b5-like heme/steroid binding domain"/>
    <property type="match status" value="1"/>
</dbReference>
<dbReference type="PROSITE" id="PS50255">
    <property type="entry name" value="CYTOCHROME_B5_2"/>
    <property type="match status" value="1"/>
</dbReference>
<reference key="1">
    <citation type="journal article" date="2002" name="Curr. Microbiol.">
        <title>Isolation and characterization of the genes encoding delta(8)-sphingolipid desaturase from Saccharomyces kluyveri and Kluyveromyces lactis.</title>
        <authorList>
            <person name="Takakuwa N."/>
            <person name="Kinoshita M."/>
            <person name="Oda Y."/>
            <person name="Ohnishi M."/>
        </authorList>
    </citation>
    <scope>NUCLEOTIDE SEQUENCE [MRNA]</scope>
    <scope>CATALYTIC ACTIVITY</scope>
    <scope>FUNCTION</scope>
    <scope>PATHWAY</scope>
    <source>
        <strain>ATCC 56498 / CBS 683 / DSM 4394 / NBRC 1090 / NRRL Y-8279</strain>
    </source>
</reference>
<keyword id="KW-0249">Electron transport</keyword>
<keyword id="KW-0349">Heme</keyword>
<keyword id="KW-0408">Iron</keyword>
<keyword id="KW-0443">Lipid metabolism</keyword>
<keyword id="KW-0472">Membrane</keyword>
<keyword id="KW-0479">Metal-binding</keyword>
<keyword id="KW-0560">Oxidoreductase</keyword>
<keyword id="KW-0746">Sphingolipid metabolism</keyword>
<keyword id="KW-0812">Transmembrane</keyword>
<keyword id="KW-1133">Transmembrane helix</keyword>
<keyword id="KW-0813">Transport</keyword>
<gene>
    <name evidence="5" type="primary">SLD</name>
</gene>
<evidence type="ECO:0000250" key="1"/>
<evidence type="ECO:0000255" key="2"/>
<evidence type="ECO:0000255" key="3">
    <source>
        <dbReference type="PROSITE-ProRule" id="PRU00279"/>
    </source>
</evidence>
<evidence type="ECO:0000269" key="4">
    <source>
    </source>
</evidence>
<evidence type="ECO:0000303" key="5">
    <source>
    </source>
</evidence>
<evidence type="ECO:0000305" key="6"/>
<evidence type="ECO:0000305" key="7">
    <source>
    </source>
</evidence>
<comment type="function">
    <text evidence="4">Delta(8)-fatty-acid desaturase which introduces a double bond at the 8-position in the long-chain base (LCB) of ceramides. Required for the formation of the di-unsaturated sphingoid base (E,E)-sphinga-4,8-dienine during glucosylceramide (GluCer) biosynthesis.</text>
</comment>
<comment type="catalytic activity">
    <reaction evidence="4">
        <text>an N-acylsphing-4-enine + 2 Fe(II)-[cytochrome b5] + O2 + 2 H(+) = a (4E,8E)-4-sphinga-4,8-dienine ceramide + 2 Fe(III)-[cytochrome b5] + 2 H2O</text>
        <dbReference type="Rhea" id="RHEA:46280"/>
        <dbReference type="Rhea" id="RHEA-COMP:10438"/>
        <dbReference type="Rhea" id="RHEA-COMP:10439"/>
        <dbReference type="ChEBI" id="CHEBI:15377"/>
        <dbReference type="ChEBI" id="CHEBI:15378"/>
        <dbReference type="ChEBI" id="CHEBI:15379"/>
        <dbReference type="ChEBI" id="CHEBI:29033"/>
        <dbReference type="ChEBI" id="CHEBI:29034"/>
        <dbReference type="ChEBI" id="CHEBI:52639"/>
        <dbReference type="ChEBI" id="CHEBI:85953"/>
        <dbReference type="EC" id="1.14.19.18"/>
    </reaction>
</comment>
<comment type="pathway">
    <text evidence="7">Lipid metabolism; sphingolipid metabolism.</text>
</comment>
<comment type="subcellular location">
    <subcellularLocation>
        <location evidence="2">Membrane</location>
        <topology evidence="2">Multi-pass membrane protein</topology>
    </subcellularLocation>
</comment>
<comment type="domain">
    <text evidence="1">The histidine box domains may contain the active site and/or be involved in metal ion binding.</text>
</comment>
<comment type="similarity">
    <text evidence="6">Belongs to the fatty acid desaturase type 1 family.</text>
</comment>
<name>SLD1_KLULC</name>
<organism>
    <name type="scientific">Kluyveromyces lactis</name>
    <name type="common">Yeast</name>
    <name type="synonym">Candida sphaerica</name>
    <dbReference type="NCBI Taxonomy" id="28985"/>
    <lineage>
        <taxon>Eukaryota</taxon>
        <taxon>Fungi</taxon>
        <taxon>Dikarya</taxon>
        <taxon>Ascomycota</taxon>
        <taxon>Saccharomycotina</taxon>
        <taxon>Saccharomycetes</taxon>
        <taxon>Saccharomycetales</taxon>
        <taxon>Saccharomycetaceae</taxon>
        <taxon>Kluyveromyces</taxon>
    </lineage>
</organism>
<protein>
    <recommendedName>
        <fullName evidence="5">Delta 8-(E)-sphingolipid desaturase</fullName>
        <ecNumber evidence="4">1.14.19.18</ecNumber>
    </recommendedName>
</protein>
<sequence length="573" mass="67065">MSRVLSRRDIADRIAKGQTIVIYEDSVLNLDKWIKFHPGGDKSIYHMIGRDATDEMNAYHDDQTITKFKIWKIGRIDYPWENMLPPIQGGRFSKIDERDDIGDYDINLTSKWRSVDESNQYTKIPKNDRLASEAEVKIYPKIPQGVVPSLDLKEAYEKKIVVDPAIVSENYDNERVYEDLTNFPSLDVKNQEWIASEYRKLHGEITAAGLYQCNYVRYLREFLRIGTLFGISFYLLSLKWFAISAICLGFAWQQLVFIAHDAGHISITHNYQVDNIIGMTVASWIGGLSLGWWKRNHDVHHLVTNDPVHDPDIQHLPFFAVSTRLFHNVYSTYYDKFLWFDKFAQKVVPIQHYLYYPILCFGRFNLYRLSWMHVLLGQGPRRGKAAWFRYYELAELSFFNYWFFYLIIYKQMPTNAERFKYVMISHIATMIVHVQITLSHFAMSTSDLGVTESFPMRQLRTSMDVDCPRWLDFFHGGLQFQVIHHLFPRLPRHNLKDAQSLVIKFCDKVGIKYSIYGFAAGNDVVISHLQQIAQQAHTMLECAKTMKKEATDTEFHTNKHVLAANVNEKRKQE</sequence>
<accession>Q8NKG8</accession>
<proteinExistence type="evidence at protein level"/>
<feature type="chain" id="PRO_0000418889" description="Delta 8-(E)-sphingolipid desaturase">
    <location>
        <begin position="1"/>
        <end position="573"/>
    </location>
</feature>
<feature type="transmembrane region" description="Helical" evidence="2">
    <location>
        <begin position="228"/>
        <end position="248"/>
    </location>
</feature>
<feature type="transmembrane region" description="Helical" evidence="2">
    <location>
        <begin position="273"/>
        <end position="293"/>
    </location>
</feature>
<feature type="transmembrane region" description="Helical" evidence="2">
    <location>
        <begin position="353"/>
        <end position="372"/>
    </location>
</feature>
<feature type="transmembrane region" description="Helical" evidence="2">
    <location>
        <begin position="393"/>
        <end position="413"/>
    </location>
</feature>
<feature type="transmembrane region" description="Helical" evidence="2">
    <location>
        <begin position="422"/>
        <end position="442"/>
    </location>
</feature>
<feature type="domain" description="Cytochrome b5 heme-binding" evidence="3">
    <location>
        <begin position="2"/>
        <end position="77"/>
    </location>
</feature>
<feature type="short sequence motif" description="Histidine box-1" evidence="6">
    <location>
        <begin position="260"/>
        <end position="264"/>
    </location>
</feature>
<feature type="short sequence motif" description="Histidine box-2" evidence="6">
    <location>
        <begin position="297"/>
        <end position="301"/>
    </location>
</feature>
<feature type="short sequence motif" description="Histidine box-3" evidence="6">
    <location>
        <begin position="481"/>
        <end position="485"/>
    </location>
</feature>
<feature type="binding site" description="axial binding residue" evidence="3">
    <location>
        <position position="37"/>
    </location>
    <ligand>
        <name>heme</name>
        <dbReference type="ChEBI" id="CHEBI:30413"/>
    </ligand>
    <ligandPart>
        <name>Fe</name>
        <dbReference type="ChEBI" id="CHEBI:18248"/>
    </ligandPart>
</feature>
<feature type="binding site" description="axial binding residue" evidence="3">
    <location>
        <position position="60"/>
    </location>
    <ligand>
        <name>heme</name>
        <dbReference type="ChEBI" id="CHEBI:30413"/>
    </ligand>
    <ligandPart>
        <name>Fe</name>
        <dbReference type="ChEBI" id="CHEBI:18248"/>
    </ligandPart>
</feature>